<evidence type="ECO:0000269" key="1">
    <source>
    </source>
</evidence>
<evidence type="ECO:0000269" key="2">
    <source>
    </source>
</evidence>
<evidence type="ECO:0000305" key="3"/>
<sequence length="141" mass="15806">MDDSQWVSIHIRDRLAQGNITIRESFLYEGQFHSPEDEKKALTEDDIDQLIIPSEGIGEVCARGRRGSEGWMDLFDGEKKICELHWDNRTKRPSNEFEVIDGDKDYKIECSGWSPQAGPLGHVFIDISAAKKKAAAAAAAK</sequence>
<dbReference type="EMBL" id="CH476597">
    <property type="protein sequence ID" value="EAU36830.1"/>
    <property type="status" value="ALT_SEQ"/>
    <property type="molecule type" value="Genomic_DNA"/>
</dbReference>
<dbReference type="RefSeq" id="XP_001212734.1">
    <property type="nucleotide sequence ID" value="XM_001212734.1"/>
</dbReference>
<dbReference type="SMR" id="Q0CRX8"/>
<dbReference type="STRING" id="341663.Q0CRX8"/>
<dbReference type="TCDB" id="1.C.119.1.3">
    <property type="family name" value="the aegerolysin (aegerolysin) family"/>
</dbReference>
<dbReference type="GeneID" id="4317936"/>
<dbReference type="OrthoDB" id="2727348at2759"/>
<dbReference type="Proteomes" id="UP000007963">
    <property type="component" value="Unassembled WGS sequence"/>
</dbReference>
<dbReference type="GO" id="GO:0005737">
    <property type="term" value="C:cytoplasm"/>
    <property type="evidence" value="ECO:0007669"/>
    <property type="project" value="UniProtKB-SubCell"/>
</dbReference>
<dbReference type="GO" id="GO:0019836">
    <property type="term" value="P:symbiont-mediated hemolysis of host erythrocyte"/>
    <property type="evidence" value="ECO:0007669"/>
    <property type="project" value="InterPro"/>
</dbReference>
<dbReference type="Gene3D" id="2.60.270.50">
    <property type="match status" value="1"/>
</dbReference>
<dbReference type="InterPro" id="IPR009413">
    <property type="entry name" value="Aegerolysin-typ"/>
</dbReference>
<dbReference type="Pfam" id="PF06355">
    <property type="entry name" value="Aegerolysin"/>
    <property type="match status" value="1"/>
</dbReference>
<accession>Q0CRX8</accession>
<name>TERL_ASPTN</name>
<reference key="1">
    <citation type="submission" date="2005-09" db="EMBL/GenBank/DDBJ databases">
        <title>Annotation of the Aspergillus terreus NIH2624 genome.</title>
        <authorList>
            <person name="Birren B.W."/>
            <person name="Lander E.S."/>
            <person name="Galagan J.E."/>
            <person name="Nusbaum C."/>
            <person name="Devon K."/>
            <person name="Henn M."/>
            <person name="Ma L.-J."/>
            <person name="Jaffe D.B."/>
            <person name="Butler J."/>
            <person name="Alvarez P."/>
            <person name="Gnerre S."/>
            <person name="Grabherr M."/>
            <person name="Kleber M."/>
            <person name="Mauceli E.W."/>
            <person name="Brockman W."/>
            <person name="Rounsley S."/>
            <person name="Young S.K."/>
            <person name="LaButti K."/>
            <person name="Pushparaj V."/>
            <person name="DeCaprio D."/>
            <person name="Crawford M."/>
            <person name="Koehrsen M."/>
            <person name="Engels R."/>
            <person name="Montgomery P."/>
            <person name="Pearson M."/>
            <person name="Howarth C."/>
            <person name="Larson L."/>
            <person name="Luoma S."/>
            <person name="White J."/>
            <person name="Alvarado L."/>
            <person name="Kodira C.D."/>
            <person name="Zeng Q."/>
            <person name="Oleary S."/>
            <person name="Yandava C."/>
            <person name="Denning D.W."/>
            <person name="Nierman W.C."/>
            <person name="Milne T."/>
            <person name="Madden K."/>
        </authorList>
    </citation>
    <scope>NUCLEOTIDE SEQUENCE [LARGE SCALE GENOMIC DNA]</scope>
    <source>
        <strain>NIH 2624 / FGSC A1156</strain>
    </source>
</reference>
<reference key="2">
    <citation type="journal article" date="2011" name="Mycopathologia">
        <title>Characterization of recombinant terrelysin, a hemolysin of Aspergillus terreus.</title>
        <authorList>
            <person name="Nayak A.P."/>
            <person name="Blachere F.M."/>
            <person name="Hettick J.M."/>
            <person name="Lukomski S."/>
            <person name="Schmechel D."/>
            <person name="Beezhold D.H."/>
        </authorList>
    </citation>
    <scope>REVISION OF GENE MODEL</scope>
    <scope>FUNCTION</scope>
    <source>
        <strain>ATCC 1012 / CBS 601.65 / NRRL 255</strain>
    </source>
</reference>
<reference key="3">
    <citation type="journal article" date="2012" name="J. Med. Microbiol.">
        <title>Development of monoclonal antibodies to recombinant terrelysin and characterization of expression in Aspergillus terreus.</title>
        <authorList>
            <person name="Nayak A.P."/>
            <person name="Green B.J."/>
            <person name="Friend S."/>
            <person name="Beezhold D.H."/>
        </authorList>
    </citation>
    <scope>DEVELOPMENTAL STAGE</scope>
    <scope>SUBCELLULAR LOCATION</scope>
</reference>
<comment type="function">
    <text evidence="1">Hemolysins are potential virulence factors. Has hemolytic activity against sheep erythrocytes in vitro.</text>
</comment>
<comment type="subcellular location">
    <subcellularLocation>
        <location evidence="2">Cytoplasm</location>
    </subcellularLocation>
    <text>Appears to be more abundant at the hyphal tip.</text>
</comment>
<comment type="developmental stage">
    <text evidence="2">Expression is highest during early hyphal growth and dramatically reduced after mycelial expansion.</text>
</comment>
<comment type="similarity">
    <text evidence="3">Belongs to the aegerolysin family.</text>
</comment>
<comment type="sequence caution" evidence="3">
    <conflict type="erroneous gene model prediction">
        <sequence resource="EMBL-CDS" id="EAU36830"/>
    </conflict>
</comment>
<protein>
    <recommendedName>
        <fullName>Terrelysin</fullName>
    </recommendedName>
    <alternativeName>
        <fullName>Hemolysin</fullName>
    </alternativeName>
</protein>
<feature type="chain" id="PRO_0000416023" description="Terrelysin">
    <location>
        <begin position="1"/>
        <end position="141"/>
    </location>
</feature>
<keyword id="KW-0204">Cytolysis</keyword>
<keyword id="KW-0963">Cytoplasm</keyword>
<keyword id="KW-0354">Hemolysis</keyword>
<keyword id="KW-1185">Reference proteome</keyword>
<proteinExistence type="evidence at transcript level"/>
<gene>
    <name type="ORF">ATEG_03556</name>
</gene>
<organism>
    <name type="scientific">Aspergillus terreus (strain NIH 2624 / FGSC A1156)</name>
    <dbReference type="NCBI Taxonomy" id="341663"/>
    <lineage>
        <taxon>Eukaryota</taxon>
        <taxon>Fungi</taxon>
        <taxon>Dikarya</taxon>
        <taxon>Ascomycota</taxon>
        <taxon>Pezizomycotina</taxon>
        <taxon>Eurotiomycetes</taxon>
        <taxon>Eurotiomycetidae</taxon>
        <taxon>Eurotiales</taxon>
        <taxon>Aspergillaceae</taxon>
        <taxon>Aspergillus</taxon>
        <taxon>Aspergillus subgen. Circumdati</taxon>
    </lineage>
</organism>